<accession>B5XY41</accession>
<dbReference type="EC" id="4.2.3.3" evidence="1"/>
<dbReference type="EMBL" id="CP000964">
    <property type="protein sequence ID" value="ACI06689.1"/>
    <property type="molecule type" value="Genomic_DNA"/>
</dbReference>
<dbReference type="SMR" id="B5XY41"/>
<dbReference type="KEGG" id="kpe:KPK_3576"/>
<dbReference type="HOGENOM" id="CLU_120420_0_1_6"/>
<dbReference type="Proteomes" id="UP000001734">
    <property type="component" value="Chromosome"/>
</dbReference>
<dbReference type="GO" id="GO:0005829">
    <property type="term" value="C:cytosol"/>
    <property type="evidence" value="ECO:0007669"/>
    <property type="project" value="TreeGrafter"/>
</dbReference>
<dbReference type="GO" id="GO:0008929">
    <property type="term" value="F:methylglyoxal synthase activity"/>
    <property type="evidence" value="ECO:0007669"/>
    <property type="project" value="UniProtKB-UniRule"/>
</dbReference>
<dbReference type="GO" id="GO:0019242">
    <property type="term" value="P:methylglyoxal biosynthetic process"/>
    <property type="evidence" value="ECO:0007669"/>
    <property type="project" value="UniProtKB-UniRule"/>
</dbReference>
<dbReference type="CDD" id="cd01422">
    <property type="entry name" value="MGS"/>
    <property type="match status" value="1"/>
</dbReference>
<dbReference type="FunFam" id="3.40.50.1380:FF:000002">
    <property type="entry name" value="Methylglyoxal synthase"/>
    <property type="match status" value="1"/>
</dbReference>
<dbReference type="Gene3D" id="3.40.50.1380">
    <property type="entry name" value="Methylglyoxal synthase-like domain"/>
    <property type="match status" value="1"/>
</dbReference>
<dbReference type="HAMAP" id="MF_00549">
    <property type="entry name" value="Methylglyoxal_synth"/>
    <property type="match status" value="1"/>
</dbReference>
<dbReference type="InterPro" id="IPR004363">
    <property type="entry name" value="Methylgl_synth"/>
</dbReference>
<dbReference type="InterPro" id="IPR018148">
    <property type="entry name" value="Methylglyoxal_synth_AS"/>
</dbReference>
<dbReference type="InterPro" id="IPR011607">
    <property type="entry name" value="MGS-like_dom"/>
</dbReference>
<dbReference type="InterPro" id="IPR036914">
    <property type="entry name" value="MGS-like_dom_sf"/>
</dbReference>
<dbReference type="NCBIfam" id="TIGR00160">
    <property type="entry name" value="MGSA"/>
    <property type="match status" value="1"/>
</dbReference>
<dbReference type="NCBIfam" id="NF003559">
    <property type="entry name" value="PRK05234.1"/>
    <property type="match status" value="1"/>
</dbReference>
<dbReference type="PANTHER" id="PTHR30492">
    <property type="entry name" value="METHYLGLYOXAL SYNTHASE"/>
    <property type="match status" value="1"/>
</dbReference>
<dbReference type="PANTHER" id="PTHR30492:SF0">
    <property type="entry name" value="METHYLGLYOXAL SYNTHASE"/>
    <property type="match status" value="1"/>
</dbReference>
<dbReference type="Pfam" id="PF02142">
    <property type="entry name" value="MGS"/>
    <property type="match status" value="1"/>
</dbReference>
<dbReference type="PIRSF" id="PIRSF006614">
    <property type="entry name" value="Methylglyox_syn"/>
    <property type="match status" value="1"/>
</dbReference>
<dbReference type="SMART" id="SM00851">
    <property type="entry name" value="MGS"/>
    <property type="match status" value="1"/>
</dbReference>
<dbReference type="SUPFAM" id="SSF52335">
    <property type="entry name" value="Methylglyoxal synthase-like"/>
    <property type="match status" value="1"/>
</dbReference>
<dbReference type="PROSITE" id="PS01335">
    <property type="entry name" value="METHYLGLYOXAL_SYNTH"/>
    <property type="match status" value="1"/>
</dbReference>
<dbReference type="PROSITE" id="PS51855">
    <property type="entry name" value="MGS"/>
    <property type="match status" value="1"/>
</dbReference>
<feature type="chain" id="PRO_1000128997" description="Methylglyoxal synthase">
    <location>
        <begin position="1"/>
        <end position="152"/>
    </location>
</feature>
<feature type="domain" description="MGS-like" evidence="1">
    <location>
        <begin position="1"/>
        <end position="152"/>
    </location>
</feature>
<feature type="active site" description="Proton donor/acceptor" evidence="1">
    <location>
        <position position="71"/>
    </location>
</feature>
<feature type="binding site" evidence="1">
    <location>
        <position position="19"/>
    </location>
    <ligand>
        <name>substrate</name>
    </ligand>
</feature>
<feature type="binding site" evidence="1">
    <location>
        <position position="23"/>
    </location>
    <ligand>
        <name>substrate</name>
    </ligand>
</feature>
<feature type="binding site" evidence="1">
    <location>
        <begin position="45"/>
        <end position="48"/>
    </location>
    <ligand>
        <name>substrate</name>
    </ligand>
</feature>
<feature type="binding site" evidence="1">
    <location>
        <begin position="65"/>
        <end position="66"/>
    </location>
    <ligand>
        <name>substrate</name>
    </ligand>
</feature>
<feature type="binding site" evidence="1">
    <location>
        <position position="98"/>
    </location>
    <ligand>
        <name>substrate</name>
    </ligand>
</feature>
<evidence type="ECO:0000255" key="1">
    <source>
        <dbReference type="HAMAP-Rule" id="MF_00549"/>
    </source>
</evidence>
<organism>
    <name type="scientific">Klebsiella pneumoniae (strain 342)</name>
    <dbReference type="NCBI Taxonomy" id="507522"/>
    <lineage>
        <taxon>Bacteria</taxon>
        <taxon>Pseudomonadati</taxon>
        <taxon>Pseudomonadota</taxon>
        <taxon>Gammaproteobacteria</taxon>
        <taxon>Enterobacterales</taxon>
        <taxon>Enterobacteriaceae</taxon>
        <taxon>Klebsiella/Raoultella group</taxon>
        <taxon>Klebsiella</taxon>
        <taxon>Klebsiella pneumoniae complex</taxon>
    </lineage>
</organism>
<sequence length="152" mass="16801">MELTTRTLSAQKHIALVAHDHCKDMLMKWVARHQALLAQHVLYATGTTGNLVSRATGLEVNAMLSGPMGGDQQVGALISEGKIDVLIFFWDPLNAVPHDPDVKALLRLATVWNIPVATNVSTADFIIQSPHFNQPLDILIPDYPRYLAERLK</sequence>
<keyword id="KW-0456">Lyase</keyword>
<comment type="function">
    <text evidence="1">Catalyzes the formation of methylglyoxal from dihydroxyacetone phosphate.</text>
</comment>
<comment type="catalytic activity">
    <reaction evidence="1">
        <text>dihydroxyacetone phosphate = methylglyoxal + phosphate</text>
        <dbReference type="Rhea" id="RHEA:17937"/>
        <dbReference type="ChEBI" id="CHEBI:17158"/>
        <dbReference type="ChEBI" id="CHEBI:43474"/>
        <dbReference type="ChEBI" id="CHEBI:57642"/>
        <dbReference type="EC" id="4.2.3.3"/>
    </reaction>
</comment>
<comment type="similarity">
    <text evidence="1">Belongs to the methylglyoxal synthase family.</text>
</comment>
<proteinExistence type="inferred from homology"/>
<name>MGSA_KLEP3</name>
<reference key="1">
    <citation type="journal article" date="2008" name="PLoS Genet.">
        <title>Complete genome sequence of the N2-fixing broad host range endophyte Klebsiella pneumoniae 342 and virulence predictions verified in mice.</title>
        <authorList>
            <person name="Fouts D.E."/>
            <person name="Tyler H.L."/>
            <person name="DeBoy R.T."/>
            <person name="Daugherty S."/>
            <person name="Ren Q."/>
            <person name="Badger J.H."/>
            <person name="Durkin A.S."/>
            <person name="Huot H."/>
            <person name="Shrivastava S."/>
            <person name="Kothari S."/>
            <person name="Dodson R.J."/>
            <person name="Mohamoud Y."/>
            <person name="Khouri H."/>
            <person name="Roesch L.F.W."/>
            <person name="Krogfelt K.A."/>
            <person name="Struve C."/>
            <person name="Triplett E.W."/>
            <person name="Methe B.A."/>
        </authorList>
    </citation>
    <scope>NUCLEOTIDE SEQUENCE [LARGE SCALE GENOMIC DNA]</scope>
    <source>
        <strain>342</strain>
    </source>
</reference>
<protein>
    <recommendedName>
        <fullName evidence="1">Methylglyoxal synthase</fullName>
        <shortName evidence="1">MGS</shortName>
        <ecNumber evidence="1">4.2.3.3</ecNumber>
    </recommendedName>
</protein>
<gene>
    <name evidence="1" type="primary">mgsA</name>
    <name type="ordered locus">KPK_3576</name>
</gene>